<gene>
    <name evidence="1" type="primary">argH</name>
    <name type="ordered locus">EcHS_A4194</name>
</gene>
<name>ARLY_ECOHS</name>
<feature type="chain" id="PRO_1000057049" description="Argininosuccinate lyase">
    <location>
        <begin position="1"/>
        <end position="457"/>
    </location>
</feature>
<keyword id="KW-0028">Amino-acid biosynthesis</keyword>
<keyword id="KW-0055">Arginine biosynthesis</keyword>
<keyword id="KW-0963">Cytoplasm</keyword>
<keyword id="KW-0456">Lyase</keyword>
<protein>
    <recommendedName>
        <fullName evidence="1">Argininosuccinate lyase</fullName>
        <shortName evidence="1">ASAL</shortName>
        <ecNumber evidence="1">4.3.2.1</ecNumber>
    </recommendedName>
    <alternativeName>
        <fullName evidence="1">Arginosuccinase</fullName>
    </alternativeName>
</protein>
<proteinExistence type="inferred from homology"/>
<dbReference type="EC" id="4.3.2.1" evidence="1"/>
<dbReference type="EMBL" id="CP000802">
    <property type="protein sequence ID" value="ABV08372.1"/>
    <property type="molecule type" value="Genomic_DNA"/>
</dbReference>
<dbReference type="RefSeq" id="WP_001230087.1">
    <property type="nucleotide sequence ID" value="NC_009800.1"/>
</dbReference>
<dbReference type="SMR" id="A8A768"/>
<dbReference type="KEGG" id="ecx:EcHS_A4194"/>
<dbReference type="HOGENOM" id="CLU_027272_2_3_6"/>
<dbReference type="UniPathway" id="UPA00068">
    <property type="reaction ID" value="UER00114"/>
</dbReference>
<dbReference type="GO" id="GO:0005829">
    <property type="term" value="C:cytosol"/>
    <property type="evidence" value="ECO:0007669"/>
    <property type="project" value="TreeGrafter"/>
</dbReference>
<dbReference type="GO" id="GO:0004056">
    <property type="term" value="F:argininosuccinate lyase activity"/>
    <property type="evidence" value="ECO:0007669"/>
    <property type="project" value="UniProtKB-UniRule"/>
</dbReference>
<dbReference type="GO" id="GO:0042450">
    <property type="term" value="P:arginine biosynthetic process via ornithine"/>
    <property type="evidence" value="ECO:0007669"/>
    <property type="project" value="InterPro"/>
</dbReference>
<dbReference type="GO" id="GO:0006526">
    <property type="term" value="P:L-arginine biosynthetic process"/>
    <property type="evidence" value="ECO:0007669"/>
    <property type="project" value="UniProtKB-UniRule"/>
</dbReference>
<dbReference type="CDD" id="cd01359">
    <property type="entry name" value="Argininosuccinate_lyase"/>
    <property type="match status" value="1"/>
</dbReference>
<dbReference type="FunFam" id="1.10.275.10:FF:000004">
    <property type="entry name" value="Argininosuccinate lyase"/>
    <property type="match status" value="1"/>
</dbReference>
<dbReference type="FunFam" id="1.10.40.30:FF:000001">
    <property type="entry name" value="Argininosuccinate lyase"/>
    <property type="match status" value="1"/>
</dbReference>
<dbReference type="FunFam" id="1.20.200.10:FF:000006">
    <property type="entry name" value="Argininosuccinate lyase"/>
    <property type="match status" value="1"/>
</dbReference>
<dbReference type="Gene3D" id="1.10.40.30">
    <property type="entry name" value="Fumarase/aspartase (C-terminal domain)"/>
    <property type="match status" value="1"/>
</dbReference>
<dbReference type="Gene3D" id="1.20.200.10">
    <property type="entry name" value="Fumarase/aspartase (Central domain)"/>
    <property type="match status" value="1"/>
</dbReference>
<dbReference type="Gene3D" id="1.10.275.10">
    <property type="entry name" value="Fumarase/aspartase (N-terminal domain)"/>
    <property type="match status" value="1"/>
</dbReference>
<dbReference type="HAMAP" id="MF_00006">
    <property type="entry name" value="Arg_succ_lyase"/>
    <property type="match status" value="1"/>
</dbReference>
<dbReference type="InterPro" id="IPR029419">
    <property type="entry name" value="Arg_succ_lyase_C"/>
</dbReference>
<dbReference type="InterPro" id="IPR009049">
    <property type="entry name" value="Argininosuccinate_lyase"/>
</dbReference>
<dbReference type="InterPro" id="IPR024083">
    <property type="entry name" value="Fumarase/histidase_N"/>
</dbReference>
<dbReference type="InterPro" id="IPR020557">
    <property type="entry name" value="Fumarate_lyase_CS"/>
</dbReference>
<dbReference type="InterPro" id="IPR000362">
    <property type="entry name" value="Fumarate_lyase_fam"/>
</dbReference>
<dbReference type="InterPro" id="IPR022761">
    <property type="entry name" value="Fumarate_lyase_N"/>
</dbReference>
<dbReference type="InterPro" id="IPR008948">
    <property type="entry name" value="L-Aspartase-like"/>
</dbReference>
<dbReference type="NCBIfam" id="TIGR00838">
    <property type="entry name" value="argH"/>
    <property type="match status" value="1"/>
</dbReference>
<dbReference type="NCBIfam" id="NF008964">
    <property type="entry name" value="PRK12308.1"/>
    <property type="match status" value="1"/>
</dbReference>
<dbReference type="PANTHER" id="PTHR43814">
    <property type="entry name" value="ARGININOSUCCINATE LYASE"/>
    <property type="match status" value="1"/>
</dbReference>
<dbReference type="PANTHER" id="PTHR43814:SF1">
    <property type="entry name" value="ARGININOSUCCINATE LYASE"/>
    <property type="match status" value="1"/>
</dbReference>
<dbReference type="Pfam" id="PF14698">
    <property type="entry name" value="ASL_C2"/>
    <property type="match status" value="1"/>
</dbReference>
<dbReference type="Pfam" id="PF00206">
    <property type="entry name" value="Lyase_1"/>
    <property type="match status" value="1"/>
</dbReference>
<dbReference type="PRINTS" id="PR00145">
    <property type="entry name" value="ARGSUCLYASE"/>
</dbReference>
<dbReference type="PRINTS" id="PR00149">
    <property type="entry name" value="FUMRATELYASE"/>
</dbReference>
<dbReference type="SUPFAM" id="SSF48557">
    <property type="entry name" value="L-aspartase-like"/>
    <property type="match status" value="1"/>
</dbReference>
<dbReference type="PROSITE" id="PS00163">
    <property type="entry name" value="FUMARATE_LYASES"/>
    <property type="match status" value="1"/>
</dbReference>
<accession>A8A768</accession>
<organism>
    <name type="scientific">Escherichia coli O9:H4 (strain HS)</name>
    <dbReference type="NCBI Taxonomy" id="331112"/>
    <lineage>
        <taxon>Bacteria</taxon>
        <taxon>Pseudomonadati</taxon>
        <taxon>Pseudomonadota</taxon>
        <taxon>Gammaproteobacteria</taxon>
        <taxon>Enterobacterales</taxon>
        <taxon>Enterobacteriaceae</taxon>
        <taxon>Escherichia</taxon>
    </lineage>
</organism>
<reference key="1">
    <citation type="journal article" date="2008" name="J. Bacteriol.">
        <title>The pangenome structure of Escherichia coli: comparative genomic analysis of E. coli commensal and pathogenic isolates.</title>
        <authorList>
            <person name="Rasko D.A."/>
            <person name="Rosovitz M.J."/>
            <person name="Myers G.S.A."/>
            <person name="Mongodin E.F."/>
            <person name="Fricke W.F."/>
            <person name="Gajer P."/>
            <person name="Crabtree J."/>
            <person name="Sebaihia M."/>
            <person name="Thomson N.R."/>
            <person name="Chaudhuri R."/>
            <person name="Henderson I.R."/>
            <person name="Sperandio V."/>
            <person name="Ravel J."/>
        </authorList>
    </citation>
    <scope>NUCLEOTIDE SEQUENCE [LARGE SCALE GENOMIC DNA]</scope>
    <source>
        <strain>HS</strain>
    </source>
</reference>
<comment type="catalytic activity">
    <reaction evidence="1">
        <text>2-(N(omega)-L-arginino)succinate = fumarate + L-arginine</text>
        <dbReference type="Rhea" id="RHEA:24020"/>
        <dbReference type="ChEBI" id="CHEBI:29806"/>
        <dbReference type="ChEBI" id="CHEBI:32682"/>
        <dbReference type="ChEBI" id="CHEBI:57472"/>
        <dbReference type="EC" id="4.3.2.1"/>
    </reaction>
</comment>
<comment type="pathway">
    <text evidence="1">Amino-acid biosynthesis; L-arginine biosynthesis; L-arginine from L-ornithine and carbamoyl phosphate: step 3/3.</text>
</comment>
<comment type="subcellular location">
    <subcellularLocation>
        <location evidence="1">Cytoplasm</location>
    </subcellularLocation>
</comment>
<comment type="similarity">
    <text evidence="1">Belongs to the lyase 1 family. Argininosuccinate lyase subfamily.</text>
</comment>
<evidence type="ECO:0000255" key="1">
    <source>
        <dbReference type="HAMAP-Rule" id="MF_00006"/>
    </source>
</evidence>
<sequence>MALWGGRFTQAADQRFKQFNDSLRFDYRLAEQDIVGSVAWSKALVTVGVLTAEEQAQLEEALNVLLEDVRARPQQILESDAEDIHSWVEGKLIDKVGQLGKKLHTGRSRNDQVATDLKLWCKDTVSELLTANRQLQSALVETAQNNQDAVMPGYTHLQRAQPVTFAHWCLAYVEMLARDESRLQDALKRLDVSPLGCGALAGTAYEIDREQLAGWLGFASATRNSLDSVSDRDHVLELLSAAAIGMVHLSRFAEDLIFFNTGEAGFVELSDRVTSGSSLMPQKKNPDALELIRGKCGRVQGALTGMMMTLKGLPLAYNKDMQEDKEGLFDALDTWLDCLHMAALVLDGIQVKRPRCQEAAQQGYANATELADYLVAKGVPFREAHHIVGEAVVEAIRQGKPLEDLPLSELQKFSQVIDEDVYPILSLQSCLDKRAAKGGVSPQQVAQAIAFAQARLG</sequence>